<name>ALR_GEOSM</name>
<dbReference type="EC" id="5.1.1.1" evidence="1"/>
<dbReference type="EMBL" id="CP001661">
    <property type="protein sequence ID" value="ACT19548.1"/>
    <property type="molecule type" value="Genomic_DNA"/>
</dbReference>
<dbReference type="SMR" id="C6E5Z6"/>
<dbReference type="STRING" id="443144.GM21_3527"/>
<dbReference type="KEGG" id="gem:GM21_3527"/>
<dbReference type="eggNOG" id="COG0787">
    <property type="taxonomic scope" value="Bacteria"/>
</dbReference>
<dbReference type="HOGENOM" id="CLU_028393_2_2_7"/>
<dbReference type="OrthoDB" id="9813814at2"/>
<dbReference type="UniPathway" id="UPA00042">
    <property type="reaction ID" value="UER00497"/>
</dbReference>
<dbReference type="GO" id="GO:0005829">
    <property type="term" value="C:cytosol"/>
    <property type="evidence" value="ECO:0007669"/>
    <property type="project" value="TreeGrafter"/>
</dbReference>
<dbReference type="GO" id="GO:0008784">
    <property type="term" value="F:alanine racemase activity"/>
    <property type="evidence" value="ECO:0007669"/>
    <property type="project" value="UniProtKB-UniRule"/>
</dbReference>
<dbReference type="GO" id="GO:0030170">
    <property type="term" value="F:pyridoxal phosphate binding"/>
    <property type="evidence" value="ECO:0007669"/>
    <property type="project" value="UniProtKB-UniRule"/>
</dbReference>
<dbReference type="GO" id="GO:0030632">
    <property type="term" value="P:D-alanine biosynthetic process"/>
    <property type="evidence" value="ECO:0007669"/>
    <property type="project" value="UniProtKB-UniRule"/>
</dbReference>
<dbReference type="CDD" id="cd00430">
    <property type="entry name" value="PLPDE_III_AR"/>
    <property type="match status" value="1"/>
</dbReference>
<dbReference type="FunFam" id="3.20.20.10:FF:000002">
    <property type="entry name" value="Alanine racemase"/>
    <property type="match status" value="1"/>
</dbReference>
<dbReference type="Gene3D" id="3.20.20.10">
    <property type="entry name" value="Alanine racemase"/>
    <property type="match status" value="1"/>
</dbReference>
<dbReference type="Gene3D" id="2.40.37.10">
    <property type="entry name" value="Lyase, Ornithine Decarboxylase, Chain A, domain 1"/>
    <property type="match status" value="1"/>
</dbReference>
<dbReference type="HAMAP" id="MF_01201">
    <property type="entry name" value="Ala_racemase"/>
    <property type="match status" value="1"/>
</dbReference>
<dbReference type="InterPro" id="IPR000821">
    <property type="entry name" value="Ala_racemase"/>
</dbReference>
<dbReference type="InterPro" id="IPR009006">
    <property type="entry name" value="Ala_racemase/Decarboxylase_C"/>
</dbReference>
<dbReference type="InterPro" id="IPR011079">
    <property type="entry name" value="Ala_racemase_C"/>
</dbReference>
<dbReference type="InterPro" id="IPR001608">
    <property type="entry name" value="Ala_racemase_N"/>
</dbReference>
<dbReference type="InterPro" id="IPR020622">
    <property type="entry name" value="Ala_racemase_pyridoxalP-BS"/>
</dbReference>
<dbReference type="InterPro" id="IPR029066">
    <property type="entry name" value="PLP-binding_barrel"/>
</dbReference>
<dbReference type="NCBIfam" id="TIGR00492">
    <property type="entry name" value="alr"/>
    <property type="match status" value="1"/>
</dbReference>
<dbReference type="PANTHER" id="PTHR30511">
    <property type="entry name" value="ALANINE RACEMASE"/>
    <property type="match status" value="1"/>
</dbReference>
<dbReference type="PANTHER" id="PTHR30511:SF0">
    <property type="entry name" value="ALANINE RACEMASE, CATABOLIC-RELATED"/>
    <property type="match status" value="1"/>
</dbReference>
<dbReference type="Pfam" id="PF00842">
    <property type="entry name" value="Ala_racemase_C"/>
    <property type="match status" value="1"/>
</dbReference>
<dbReference type="Pfam" id="PF01168">
    <property type="entry name" value="Ala_racemase_N"/>
    <property type="match status" value="1"/>
</dbReference>
<dbReference type="PRINTS" id="PR00992">
    <property type="entry name" value="ALARACEMASE"/>
</dbReference>
<dbReference type="SMART" id="SM01005">
    <property type="entry name" value="Ala_racemase_C"/>
    <property type="match status" value="1"/>
</dbReference>
<dbReference type="SUPFAM" id="SSF50621">
    <property type="entry name" value="Alanine racemase C-terminal domain-like"/>
    <property type="match status" value="1"/>
</dbReference>
<dbReference type="SUPFAM" id="SSF51419">
    <property type="entry name" value="PLP-binding barrel"/>
    <property type="match status" value="1"/>
</dbReference>
<dbReference type="PROSITE" id="PS00395">
    <property type="entry name" value="ALANINE_RACEMASE"/>
    <property type="match status" value="1"/>
</dbReference>
<protein>
    <recommendedName>
        <fullName evidence="1">Alanine racemase</fullName>
        <ecNumber evidence="1">5.1.1.1</ecNumber>
    </recommendedName>
</protein>
<proteinExistence type="inferred from homology"/>
<organism>
    <name type="scientific">Geobacter sp. (strain M21)</name>
    <dbReference type="NCBI Taxonomy" id="443144"/>
    <lineage>
        <taxon>Bacteria</taxon>
        <taxon>Pseudomonadati</taxon>
        <taxon>Thermodesulfobacteriota</taxon>
        <taxon>Desulfuromonadia</taxon>
        <taxon>Geobacterales</taxon>
        <taxon>Geobacteraceae</taxon>
        <taxon>Geobacter</taxon>
    </lineage>
</organism>
<feature type="chain" id="PRO_1000213834" description="Alanine racemase">
    <location>
        <begin position="1"/>
        <end position="379"/>
    </location>
</feature>
<feature type="active site" description="Proton acceptor; specific for D-alanine" evidence="1">
    <location>
        <position position="37"/>
    </location>
</feature>
<feature type="active site" description="Proton acceptor; specific for L-alanine" evidence="1">
    <location>
        <position position="269"/>
    </location>
</feature>
<feature type="binding site" evidence="1">
    <location>
        <position position="137"/>
    </location>
    <ligand>
        <name>substrate</name>
    </ligand>
</feature>
<feature type="binding site" evidence="1">
    <location>
        <position position="317"/>
    </location>
    <ligand>
        <name>substrate</name>
    </ligand>
</feature>
<feature type="modified residue" description="N6-(pyridoxal phosphate)lysine" evidence="1">
    <location>
        <position position="37"/>
    </location>
</feature>
<evidence type="ECO:0000255" key="1">
    <source>
        <dbReference type="HAMAP-Rule" id="MF_01201"/>
    </source>
</evidence>
<reference key="1">
    <citation type="submission" date="2009-07" db="EMBL/GenBank/DDBJ databases">
        <title>Complete sequence of Geobacter sp. M21.</title>
        <authorList>
            <consortium name="US DOE Joint Genome Institute"/>
            <person name="Lucas S."/>
            <person name="Copeland A."/>
            <person name="Lapidus A."/>
            <person name="Glavina del Rio T."/>
            <person name="Dalin E."/>
            <person name="Tice H."/>
            <person name="Bruce D."/>
            <person name="Goodwin L."/>
            <person name="Pitluck S."/>
            <person name="Saunders E."/>
            <person name="Brettin T."/>
            <person name="Detter J.C."/>
            <person name="Han C."/>
            <person name="Larimer F."/>
            <person name="Land M."/>
            <person name="Hauser L."/>
            <person name="Kyrpides N."/>
            <person name="Ovchinnikova G."/>
            <person name="Lovley D."/>
        </authorList>
    </citation>
    <scope>NUCLEOTIDE SEQUENCE [LARGE SCALE GENOMIC DNA]</scope>
    <source>
        <strain>M21</strain>
    </source>
</reference>
<keyword id="KW-0413">Isomerase</keyword>
<keyword id="KW-0663">Pyridoxal phosphate</keyword>
<accession>C6E5Z6</accession>
<sequence>MDSRPTVVEIDLAALRHNFSLVQKRVPEGCGLLAVVKADAYGHGFQYVSEELEKLGVDAFAVAFLAEGVQLRMSGITRPVLILGGIYPGEERRLIGLNISTALFSLEQAAALDQAALEIKCYRKAHIHLKVDTGMGRLGVPYHEVPEFLAKLKQFKNLELEGIFSHFASADELDPEGIAFTRLQAERFNAAVEEARRQGYAPSYVHVANSAAILAQDLPYCNLARPGIILYGALPSGDFEGQVPSQPVMRLKSRVAMLKWVEPGTSISYGRRYVATERALIASVPVGYADGYCRSLTNKGEALIRGQRAKVAGTVCMDWIMLDVTNVKGVAVGDDVTLLGPDPMGDCISAEEMAEKAGTIPYEVLCGIATRRVRRVYLG</sequence>
<gene>
    <name type="primary">alr</name>
    <name type="ordered locus">GM21_3527</name>
</gene>
<comment type="function">
    <text evidence="1">Catalyzes the interconversion of L-alanine and D-alanine. May also act on other amino acids.</text>
</comment>
<comment type="catalytic activity">
    <reaction evidence="1">
        <text>L-alanine = D-alanine</text>
        <dbReference type="Rhea" id="RHEA:20249"/>
        <dbReference type="ChEBI" id="CHEBI:57416"/>
        <dbReference type="ChEBI" id="CHEBI:57972"/>
        <dbReference type="EC" id="5.1.1.1"/>
    </reaction>
</comment>
<comment type="cofactor">
    <cofactor evidence="1">
        <name>pyridoxal 5'-phosphate</name>
        <dbReference type="ChEBI" id="CHEBI:597326"/>
    </cofactor>
</comment>
<comment type="pathway">
    <text evidence="1">Amino-acid biosynthesis; D-alanine biosynthesis; D-alanine from L-alanine: step 1/1.</text>
</comment>
<comment type="similarity">
    <text evidence="1">Belongs to the alanine racemase family.</text>
</comment>